<keyword id="KW-0071">Autoinducer synthesis</keyword>
<keyword id="KW-0408">Iron</keyword>
<keyword id="KW-0456">Lyase</keyword>
<keyword id="KW-0479">Metal-binding</keyword>
<keyword id="KW-0673">Quorum sensing</keyword>
<dbReference type="EC" id="4.4.1.21" evidence="1"/>
<dbReference type="EMBL" id="CP000305">
    <property type="protein sequence ID" value="ABG17126.1"/>
    <property type="molecule type" value="Genomic_DNA"/>
</dbReference>
<dbReference type="EMBL" id="ACNQ01000007">
    <property type="protein sequence ID" value="EEO77993.1"/>
    <property type="molecule type" value="Genomic_DNA"/>
</dbReference>
<dbReference type="RefSeq" id="WP_002209453.1">
    <property type="nucleotide sequence ID" value="NZ_ACNQ01000007.1"/>
</dbReference>
<dbReference type="SMR" id="Q1CLK4"/>
<dbReference type="GeneID" id="57975413"/>
<dbReference type="KEGG" id="ypn:YPN_0794"/>
<dbReference type="HOGENOM" id="CLU_107531_2_0_6"/>
<dbReference type="Proteomes" id="UP000008936">
    <property type="component" value="Chromosome"/>
</dbReference>
<dbReference type="GO" id="GO:0005506">
    <property type="term" value="F:iron ion binding"/>
    <property type="evidence" value="ECO:0007669"/>
    <property type="project" value="InterPro"/>
</dbReference>
<dbReference type="GO" id="GO:0043768">
    <property type="term" value="F:S-ribosylhomocysteine lyase activity"/>
    <property type="evidence" value="ECO:0007669"/>
    <property type="project" value="UniProtKB-UniRule"/>
</dbReference>
<dbReference type="GO" id="GO:0009372">
    <property type="term" value="P:quorum sensing"/>
    <property type="evidence" value="ECO:0007669"/>
    <property type="project" value="UniProtKB-UniRule"/>
</dbReference>
<dbReference type="FunFam" id="3.30.1360.80:FF:000001">
    <property type="entry name" value="S-ribosylhomocysteine lyase"/>
    <property type="match status" value="1"/>
</dbReference>
<dbReference type="Gene3D" id="3.30.1360.80">
    <property type="entry name" value="S-ribosylhomocysteinase (LuxS)"/>
    <property type="match status" value="1"/>
</dbReference>
<dbReference type="HAMAP" id="MF_00091">
    <property type="entry name" value="LuxS"/>
    <property type="match status" value="1"/>
</dbReference>
<dbReference type="InterPro" id="IPR037005">
    <property type="entry name" value="LuxS_sf"/>
</dbReference>
<dbReference type="InterPro" id="IPR011249">
    <property type="entry name" value="Metalloenz_LuxS/M16"/>
</dbReference>
<dbReference type="InterPro" id="IPR003815">
    <property type="entry name" value="S-ribosylhomocysteinase"/>
</dbReference>
<dbReference type="NCBIfam" id="NF002602">
    <property type="entry name" value="PRK02260.1-2"/>
    <property type="match status" value="1"/>
</dbReference>
<dbReference type="PANTHER" id="PTHR35799">
    <property type="entry name" value="S-RIBOSYLHOMOCYSTEINE LYASE"/>
    <property type="match status" value="1"/>
</dbReference>
<dbReference type="PANTHER" id="PTHR35799:SF1">
    <property type="entry name" value="S-RIBOSYLHOMOCYSTEINE LYASE"/>
    <property type="match status" value="1"/>
</dbReference>
<dbReference type="Pfam" id="PF02664">
    <property type="entry name" value="LuxS"/>
    <property type="match status" value="1"/>
</dbReference>
<dbReference type="PIRSF" id="PIRSF006160">
    <property type="entry name" value="AI2"/>
    <property type="match status" value="1"/>
</dbReference>
<dbReference type="PRINTS" id="PR01487">
    <property type="entry name" value="LUXSPROTEIN"/>
</dbReference>
<dbReference type="SUPFAM" id="SSF63411">
    <property type="entry name" value="LuxS/MPP-like metallohydrolase"/>
    <property type="match status" value="1"/>
</dbReference>
<organism>
    <name type="scientific">Yersinia pestis bv. Antiqua (strain Nepal516)</name>
    <dbReference type="NCBI Taxonomy" id="377628"/>
    <lineage>
        <taxon>Bacteria</taxon>
        <taxon>Pseudomonadati</taxon>
        <taxon>Pseudomonadota</taxon>
        <taxon>Gammaproteobacteria</taxon>
        <taxon>Enterobacterales</taxon>
        <taxon>Yersiniaceae</taxon>
        <taxon>Yersinia</taxon>
    </lineage>
</organism>
<protein>
    <recommendedName>
        <fullName evidence="1">S-ribosylhomocysteine lyase</fullName>
        <ecNumber evidence="1">4.4.1.21</ecNumber>
    </recommendedName>
    <alternativeName>
        <fullName evidence="1">AI-2 synthesis protein</fullName>
    </alternativeName>
    <alternativeName>
        <fullName evidence="1">Autoinducer-2 production protein LuxS</fullName>
    </alternativeName>
</protein>
<evidence type="ECO:0000255" key="1">
    <source>
        <dbReference type="HAMAP-Rule" id="MF_00091"/>
    </source>
</evidence>
<gene>
    <name evidence="1" type="primary">luxS</name>
    <name type="ordered locus">YPN_0794</name>
    <name type="ORF">YP516_0851</name>
</gene>
<comment type="function">
    <text evidence="1">Involved in the synthesis of autoinducer 2 (AI-2) which is secreted by bacteria and is used to communicate both the cell density and the metabolic potential of the environment. The regulation of gene expression in response to changes in cell density is called quorum sensing. Catalyzes the transformation of S-ribosylhomocysteine (RHC) to homocysteine (HC) and 4,5-dihydroxy-2,3-pentadione (DPD).</text>
</comment>
<comment type="catalytic activity">
    <reaction evidence="1">
        <text>S-(5-deoxy-D-ribos-5-yl)-L-homocysteine = (S)-4,5-dihydroxypentane-2,3-dione + L-homocysteine</text>
        <dbReference type="Rhea" id="RHEA:17753"/>
        <dbReference type="ChEBI" id="CHEBI:29484"/>
        <dbReference type="ChEBI" id="CHEBI:58195"/>
        <dbReference type="ChEBI" id="CHEBI:58199"/>
        <dbReference type="EC" id="4.4.1.21"/>
    </reaction>
</comment>
<comment type="cofactor">
    <cofactor evidence="1">
        <name>Fe cation</name>
        <dbReference type="ChEBI" id="CHEBI:24875"/>
    </cofactor>
    <text evidence="1">Binds 1 Fe cation per subunit.</text>
</comment>
<comment type="subunit">
    <text evidence="1">Homodimer.</text>
</comment>
<comment type="similarity">
    <text evidence="1">Belongs to the LuxS family.</text>
</comment>
<name>LUXS_YERPN</name>
<proteinExistence type="inferred from homology"/>
<feature type="chain" id="PRO_0000298059" description="S-ribosylhomocysteine lyase">
    <location>
        <begin position="1"/>
        <end position="171"/>
    </location>
</feature>
<feature type="binding site" evidence="1">
    <location>
        <position position="54"/>
    </location>
    <ligand>
        <name>Fe cation</name>
        <dbReference type="ChEBI" id="CHEBI:24875"/>
    </ligand>
</feature>
<feature type="binding site" evidence="1">
    <location>
        <position position="58"/>
    </location>
    <ligand>
        <name>Fe cation</name>
        <dbReference type="ChEBI" id="CHEBI:24875"/>
    </ligand>
</feature>
<feature type="binding site" evidence="1">
    <location>
        <position position="128"/>
    </location>
    <ligand>
        <name>Fe cation</name>
        <dbReference type="ChEBI" id="CHEBI:24875"/>
    </ligand>
</feature>
<accession>Q1CLK4</accession>
<accession>C4GPY7</accession>
<sequence length="171" mass="19396">MPLLDSFTVDHTIMKAPAVRVAKTMKTPHGDEITVFDLRFCVPNKEVMPEKGIHTLEHLFAGFMRDHLNGDGVEIIDISPMGCRTGFYMSLIGTPDEQRVADAWKAAMADVLKVTDQRKIPELNEYQCGTYHMHSLEEAQSIAKDILDRDVRINHNEELALPKEKLTELHI</sequence>
<reference key="1">
    <citation type="journal article" date="2006" name="J. Bacteriol.">
        <title>Complete genome sequence of Yersinia pestis strains Antiqua and Nepal516: evidence of gene reduction in an emerging pathogen.</title>
        <authorList>
            <person name="Chain P.S.G."/>
            <person name="Hu P."/>
            <person name="Malfatti S.A."/>
            <person name="Radnedge L."/>
            <person name="Larimer F."/>
            <person name="Vergez L.M."/>
            <person name="Worsham P."/>
            <person name="Chu M.C."/>
            <person name="Andersen G.L."/>
        </authorList>
    </citation>
    <scope>NUCLEOTIDE SEQUENCE [LARGE SCALE GENOMIC DNA]</scope>
    <source>
        <strain>Nepal516</strain>
    </source>
</reference>
<reference key="2">
    <citation type="submission" date="2009-04" db="EMBL/GenBank/DDBJ databases">
        <title>Yersinia pestis Nepal516A whole genome shotgun sequencing project.</title>
        <authorList>
            <person name="Plunkett G. III"/>
            <person name="Anderson B.D."/>
            <person name="Baumler D.J."/>
            <person name="Burland V."/>
            <person name="Cabot E.L."/>
            <person name="Glasner J.D."/>
            <person name="Mau B."/>
            <person name="Neeno-Eckwall E."/>
            <person name="Perna N.T."/>
            <person name="Munk A.C."/>
            <person name="Tapia R."/>
            <person name="Green L.D."/>
            <person name="Rogers Y.C."/>
            <person name="Detter J.C."/>
            <person name="Bruce D.C."/>
            <person name="Brettin T.S."/>
        </authorList>
    </citation>
    <scope>NUCLEOTIDE SEQUENCE [LARGE SCALE GENOMIC DNA]</scope>
    <source>
        <strain>Nepal516</strain>
    </source>
</reference>